<dbReference type="EC" id="6.1.1.-" evidence="1"/>
<dbReference type="EMBL" id="CP000010">
    <property type="protein sequence ID" value="AAU49505.1"/>
    <property type="molecule type" value="Genomic_DNA"/>
</dbReference>
<dbReference type="RefSeq" id="YP_103510.1">
    <property type="nucleotide sequence ID" value="NC_006348.1"/>
</dbReference>
<dbReference type="SMR" id="Q62IG0"/>
<dbReference type="KEGG" id="bma:BMA1915"/>
<dbReference type="PATRIC" id="fig|243160.12.peg.1960"/>
<dbReference type="eggNOG" id="COG0008">
    <property type="taxonomic scope" value="Bacteria"/>
</dbReference>
<dbReference type="HOGENOM" id="CLU_015768_0_1_4"/>
<dbReference type="Proteomes" id="UP000006693">
    <property type="component" value="Chromosome 1"/>
</dbReference>
<dbReference type="GO" id="GO:0005829">
    <property type="term" value="C:cytosol"/>
    <property type="evidence" value="ECO:0007669"/>
    <property type="project" value="TreeGrafter"/>
</dbReference>
<dbReference type="GO" id="GO:0005524">
    <property type="term" value="F:ATP binding"/>
    <property type="evidence" value="ECO:0007669"/>
    <property type="project" value="UniProtKB-KW"/>
</dbReference>
<dbReference type="GO" id="GO:0004818">
    <property type="term" value="F:glutamate-tRNA ligase activity"/>
    <property type="evidence" value="ECO:0007669"/>
    <property type="project" value="TreeGrafter"/>
</dbReference>
<dbReference type="GO" id="GO:0008270">
    <property type="term" value="F:zinc ion binding"/>
    <property type="evidence" value="ECO:0007669"/>
    <property type="project" value="UniProtKB-UniRule"/>
</dbReference>
<dbReference type="GO" id="GO:0006424">
    <property type="term" value="P:glutamyl-tRNA aminoacylation"/>
    <property type="evidence" value="ECO:0007669"/>
    <property type="project" value="InterPro"/>
</dbReference>
<dbReference type="GO" id="GO:0006400">
    <property type="term" value="P:tRNA modification"/>
    <property type="evidence" value="ECO:0007669"/>
    <property type="project" value="InterPro"/>
</dbReference>
<dbReference type="Gene3D" id="3.40.50.620">
    <property type="entry name" value="HUPs"/>
    <property type="match status" value="1"/>
</dbReference>
<dbReference type="HAMAP" id="MF_01428">
    <property type="entry name" value="Glu_Q_tRNA_synth"/>
    <property type="match status" value="1"/>
</dbReference>
<dbReference type="InterPro" id="IPR022380">
    <property type="entry name" value="Glu-Q_tRNA(Asp)_Synthase"/>
</dbReference>
<dbReference type="InterPro" id="IPR000924">
    <property type="entry name" value="Glu/Gln-tRNA-synth"/>
</dbReference>
<dbReference type="InterPro" id="IPR020058">
    <property type="entry name" value="Glu/Gln-tRNA-synth_Ib_cat-dom"/>
</dbReference>
<dbReference type="InterPro" id="IPR049940">
    <property type="entry name" value="GluQ/Sye"/>
</dbReference>
<dbReference type="InterPro" id="IPR014729">
    <property type="entry name" value="Rossmann-like_a/b/a_fold"/>
</dbReference>
<dbReference type="NCBIfam" id="NF004313">
    <property type="entry name" value="PRK05710.1-2"/>
    <property type="match status" value="1"/>
</dbReference>
<dbReference type="NCBIfam" id="NF004314">
    <property type="entry name" value="PRK05710.1-3"/>
    <property type="match status" value="1"/>
</dbReference>
<dbReference type="NCBIfam" id="TIGR03838">
    <property type="entry name" value="queuosine_YadB"/>
    <property type="match status" value="1"/>
</dbReference>
<dbReference type="PANTHER" id="PTHR43311">
    <property type="entry name" value="GLUTAMATE--TRNA LIGASE"/>
    <property type="match status" value="1"/>
</dbReference>
<dbReference type="PANTHER" id="PTHR43311:SF1">
    <property type="entry name" value="GLUTAMYL-Q TRNA(ASP) SYNTHETASE"/>
    <property type="match status" value="1"/>
</dbReference>
<dbReference type="Pfam" id="PF00749">
    <property type="entry name" value="tRNA-synt_1c"/>
    <property type="match status" value="1"/>
</dbReference>
<dbReference type="PRINTS" id="PR00987">
    <property type="entry name" value="TRNASYNTHGLU"/>
</dbReference>
<dbReference type="SUPFAM" id="SSF52374">
    <property type="entry name" value="Nucleotidylyl transferase"/>
    <property type="match status" value="1"/>
</dbReference>
<keyword id="KW-0030">Aminoacyl-tRNA synthetase</keyword>
<keyword id="KW-0067">ATP-binding</keyword>
<keyword id="KW-0436">Ligase</keyword>
<keyword id="KW-0479">Metal-binding</keyword>
<keyword id="KW-0547">Nucleotide-binding</keyword>
<keyword id="KW-1185">Reference proteome</keyword>
<keyword id="KW-0862">Zinc</keyword>
<comment type="function">
    <text evidence="1">Catalyzes the tRNA-independent activation of glutamate in presence of ATP and the subsequent transfer of glutamate onto a tRNA(Asp). Glutamate is transferred on the 2-amino-5-(4,5-dihydroxy-2-cyclopenten-1-yl) moiety of the queuosine in the wobble position of the QUC anticodon.</text>
</comment>
<comment type="cofactor">
    <cofactor evidence="1">
        <name>Zn(2+)</name>
        <dbReference type="ChEBI" id="CHEBI:29105"/>
    </cofactor>
    <text evidence="1">Binds 1 zinc ion per subunit.</text>
</comment>
<comment type="similarity">
    <text evidence="1">Belongs to the class-I aminoacyl-tRNA synthetase family. GluQ subfamily.</text>
</comment>
<proteinExistence type="inferred from homology"/>
<feature type="chain" id="PRO_0000208290" description="Glutamyl-Q tRNA(Asp) synthetase">
    <location>
        <begin position="1"/>
        <end position="297"/>
    </location>
</feature>
<feature type="short sequence motif" description="'HIGH' region">
    <location>
        <begin position="10"/>
        <end position="20"/>
    </location>
</feature>
<feature type="short sequence motif" description="'KMSKS' region">
    <location>
        <begin position="238"/>
        <end position="242"/>
    </location>
</feature>
<feature type="binding site" evidence="1">
    <location>
        <begin position="7"/>
        <end position="11"/>
    </location>
    <ligand>
        <name>L-glutamate</name>
        <dbReference type="ChEBI" id="CHEBI:29985"/>
    </ligand>
</feature>
<feature type="binding site" evidence="1">
    <location>
        <position position="43"/>
    </location>
    <ligand>
        <name>L-glutamate</name>
        <dbReference type="ChEBI" id="CHEBI:29985"/>
    </ligand>
</feature>
<feature type="binding site" evidence="1">
    <location>
        <position position="99"/>
    </location>
    <ligand>
        <name>Zn(2+)</name>
        <dbReference type="ChEBI" id="CHEBI:29105"/>
    </ligand>
</feature>
<feature type="binding site" evidence="1">
    <location>
        <position position="101"/>
    </location>
    <ligand>
        <name>Zn(2+)</name>
        <dbReference type="ChEBI" id="CHEBI:29105"/>
    </ligand>
</feature>
<feature type="binding site" evidence="1">
    <location>
        <position position="122"/>
    </location>
    <ligand>
        <name>Zn(2+)</name>
        <dbReference type="ChEBI" id="CHEBI:29105"/>
    </ligand>
</feature>
<feature type="binding site" evidence="1">
    <location>
        <position position="126"/>
    </location>
    <ligand>
        <name>Zn(2+)</name>
        <dbReference type="ChEBI" id="CHEBI:29105"/>
    </ligand>
</feature>
<feature type="binding site" evidence="1">
    <location>
        <position position="182"/>
    </location>
    <ligand>
        <name>L-glutamate</name>
        <dbReference type="ChEBI" id="CHEBI:29985"/>
    </ligand>
</feature>
<feature type="binding site" evidence="1">
    <location>
        <position position="200"/>
    </location>
    <ligand>
        <name>L-glutamate</name>
        <dbReference type="ChEBI" id="CHEBI:29985"/>
    </ligand>
</feature>
<feature type="binding site" evidence="1">
    <location>
        <position position="241"/>
    </location>
    <ligand>
        <name>ATP</name>
        <dbReference type="ChEBI" id="CHEBI:30616"/>
    </ligand>
</feature>
<protein>
    <recommendedName>
        <fullName evidence="1">Glutamyl-Q tRNA(Asp) synthetase</fullName>
        <shortName evidence="1">Glu-Q-RSs</shortName>
        <ecNumber evidence="1">6.1.1.-</ecNumber>
    </recommendedName>
</protein>
<reference key="1">
    <citation type="journal article" date="2004" name="Proc. Natl. Acad. Sci. U.S.A.">
        <title>Structural flexibility in the Burkholderia mallei genome.</title>
        <authorList>
            <person name="Nierman W.C."/>
            <person name="DeShazer D."/>
            <person name="Kim H.S."/>
            <person name="Tettelin H."/>
            <person name="Nelson K.E."/>
            <person name="Feldblyum T.V."/>
            <person name="Ulrich R.L."/>
            <person name="Ronning C.M."/>
            <person name="Brinkac L.M."/>
            <person name="Daugherty S.C."/>
            <person name="Davidsen T.D."/>
            <person name="DeBoy R.T."/>
            <person name="Dimitrov G."/>
            <person name="Dodson R.J."/>
            <person name="Durkin A.S."/>
            <person name="Gwinn M.L."/>
            <person name="Haft D.H."/>
            <person name="Khouri H.M."/>
            <person name="Kolonay J.F."/>
            <person name="Madupu R."/>
            <person name="Mohammoud Y."/>
            <person name="Nelson W.C."/>
            <person name="Radune D."/>
            <person name="Romero C.M."/>
            <person name="Sarria S."/>
            <person name="Selengut J."/>
            <person name="Shamblin C."/>
            <person name="Sullivan S.A."/>
            <person name="White O."/>
            <person name="Yu Y."/>
            <person name="Zafar N."/>
            <person name="Zhou L."/>
            <person name="Fraser C.M."/>
        </authorList>
    </citation>
    <scope>NUCLEOTIDE SEQUENCE [LARGE SCALE GENOMIC DNA]</scope>
    <source>
        <strain>ATCC 23344</strain>
    </source>
</reference>
<name>GLUQ_BURMA</name>
<sequence>MTRYRGRFAPSPTGPLHFGSLVGALASWLDARAWGGAWLVRIEDIDGPRTVPGAAEDMLATLRGFGFIADEPPVWQSARVAHYEAALARLTAAGLVYPCGCSRKEIADSLRAAHERHTTLAYPGTCRTGLHGKPARAWRLRVPDGAAAVVAFDDRWQRAQTQNLATEVGDFVLKRADGQWAYQLAVVVDDGDANITHVVRGADLLDSTARQIYLQRCLGLPTPRYLHVPVVLDANGEKLSKQTGAAALDPAAPLPALAAAARHLGLALDGAACASLDAFQAAAIAAWDARFGPNARG</sequence>
<accession>Q62IG0</accession>
<gene>
    <name evidence="1" type="primary">gluQ</name>
    <name type="ordered locus">BMA1915</name>
</gene>
<organism>
    <name type="scientific">Burkholderia mallei (strain ATCC 23344)</name>
    <dbReference type="NCBI Taxonomy" id="243160"/>
    <lineage>
        <taxon>Bacteria</taxon>
        <taxon>Pseudomonadati</taxon>
        <taxon>Pseudomonadota</taxon>
        <taxon>Betaproteobacteria</taxon>
        <taxon>Burkholderiales</taxon>
        <taxon>Burkholderiaceae</taxon>
        <taxon>Burkholderia</taxon>
        <taxon>pseudomallei group</taxon>
    </lineage>
</organism>
<evidence type="ECO:0000255" key="1">
    <source>
        <dbReference type="HAMAP-Rule" id="MF_01428"/>
    </source>
</evidence>